<accession>Q975K6</accession>
<gene>
    <name evidence="1" type="primary">rpl34e</name>
    <name type="ordered locus">STK_04085</name>
    <name type="ORF">STS058</name>
</gene>
<comment type="similarity">
    <text evidence="1">Belongs to the eukaryotic ribosomal protein eL34 family.</text>
</comment>
<reference key="1">
    <citation type="journal article" date="2001" name="DNA Res.">
        <title>Complete genome sequence of an aerobic thermoacidophilic Crenarchaeon, Sulfolobus tokodaii strain7.</title>
        <authorList>
            <person name="Kawarabayasi Y."/>
            <person name="Hino Y."/>
            <person name="Horikawa H."/>
            <person name="Jin-no K."/>
            <person name="Takahashi M."/>
            <person name="Sekine M."/>
            <person name="Baba S."/>
            <person name="Ankai A."/>
            <person name="Kosugi H."/>
            <person name="Hosoyama A."/>
            <person name="Fukui S."/>
            <person name="Nagai Y."/>
            <person name="Nishijima K."/>
            <person name="Otsuka R."/>
            <person name="Nakazawa H."/>
            <person name="Takamiya M."/>
            <person name="Kato Y."/>
            <person name="Yoshizawa T."/>
            <person name="Tanaka T."/>
            <person name="Kudoh Y."/>
            <person name="Yamazaki J."/>
            <person name="Kushida N."/>
            <person name="Oguchi A."/>
            <person name="Aoki K."/>
            <person name="Masuda S."/>
            <person name="Yanagii M."/>
            <person name="Nishimura M."/>
            <person name="Yamagishi A."/>
            <person name="Oshima T."/>
            <person name="Kikuchi H."/>
        </authorList>
    </citation>
    <scope>NUCLEOTIDE SEQUENCE [LARGE SCALE GENOMIC DNA]</scope>
    <source>
        <strain>DSM 16993 / JCM 10545 / NBRC 100140 / 7</strain>
    </source>
</reference>
<sequence length="87" mass="10226">MPNPHYRSTSYRKIHTKLPSGKSTIHYERRKNNRAVCAICKKPLQGVKTNLLYKYSKTEKRPERMYGGYICYKCLENLIKQTLRGSS</sequence>
<feature type="chain" id="PRO_0000131858" description="Large ribosomal subunit protein eL34">
    <location>
        <begin position="1"/>
        <end position="87"/>
    </location>
</feature>
<keyword id="KW-1185">Reference proteome</keyword>
<keyword id="KW-0687">Ribonucleoprotein</keyword>
<keyword id="KW-0689">Ribosomal protein</keyword>
<dbReference type="EMBL" id="BA000023">
    <property type="protein sequence ID" value="BAB65394.1"/>
    <property type="molecule type" value="Genomic_DNA"/>
</dbReference>
<dbReference type="RefSeq" id="WP_010978377.1">
    <property type="nucleotide sequence ID" value="NC_003106.2"/>
</dbReference>
<dbReference type="SMR" id="Q975K6"/>
<dbReference type="STRING" id="273063.STK_04085"/>
<dbReference type="GeneID" id="1458341"/>
<dbReference type="KEGG" id="sto:STK_04085"/>
<dbReference type="PATRIC" id="fig|273063.9.peg.474"/>
<dbReference type="eggNOG" id="arCOG04168">
    <property type="taxonomic scope" value="Archaea"/>
</dbReference>
<dbReference type="OrthoDB" id="43096at2157"/>
<dbReference type="Proteomes" id="UP000001015">
    <property type="component" value="Chromosome"/>
</dbReference>
<dbReference type="GO" id="GO:1990904">
    <property type="term" value="C:ribonucleoprotein complex"/>
    <property type="evidence" value="ECO:0007669"/>
    <property type="project" value="UniProtKB-KW"/>
</dbReference>
<dbReference type="GO" id="GO:0005840">
    <property type="term" value="C:ribosome"/>
    <property type="evidence" value="ECO:0007669"/>
    <property type="project" value="UniProtKB-KW"/>
</dbReference>
<dbReference type="GO" id="GO:0003735">
    <property type="term" value="F:structural constituent of ribosome"/>
    <property type="evidence" value="ECO:0007669"/>
    <property type="project" value="InterPro"/>
</dbReference>
<dbReference type="GO" id="GO:0006412">
    <property type="term" value="P:translation"/>
    <property type="evidence" value="ECO:0007669"/>
    <property type="project" value="UniProtKB-UniRule"/>
</dbReference>
<dbReference type="Gene3D" id="6.20.340.10">
    <property type="match status" value="1"/>
</dbReference>
<dbReference type="HAMAP" id="MF_00349">
    <property type="entry name" value="Ribosomal_eL34"/>
    <property type="match status" value="1"/>
</dbReference>
<dbReference type="InterPro" id="IPR008195">
    <property type="entry name" value="Ribosomal_eL34"/>
</dbReference>
<dbReference type="InterPro" id="IPR038562">
    <property type="entry name" value="Ribosomal_eL34_C_sf"/>
</dbReference>
<dbReference type="InterPro" id="IPR018065">
    <property type="entry name" value="Ribosomal_eL34_CS"/>
</dbReference>
<dbReference type="InterPro" id="IPR047868">
    <property type="entry name" value="Ribosomal_L34e_arc-type"/>
</dbReference>
<dbReference type="NCBIfam" id="NF003143">
    <property type="entry name" value="PRK04059.1"/>
    <property type="match status" value="1"/>
</dbReference>
<dbReference type="Pfam" id="PF01199">
    <property type="entry name" value="Ribosomal_L34e"/>
    <property type="match status" value="1"/>
</dbReference>
<dbReference type="PRINTS" id="PR01250">
    <property type="entry name" value="RIBOSOMALL34"/>
</dbReference>
<dbReference type="PROSITE" id="PS01145">
    <property type="entry name" value="RIBOSOMAL_L34E"/>
    <property type="match status" value="1"/>
</dbReference>
<proteinExistence type="inferred from homology"/>
<name>RL34_SULTO</name>
<organism>
    <name type="scientific">Sulfurisphaera tokodaii (strain DSM 16993 / JCM 10545 / NBRC 100140 / 7)</name>
    <name type="common">Sulfolobus tokodaii</name>
    <dbReference type="NCBI Taxonomy" id="273063"/>
    <lineage>
        <taxon>Archaea</taxon>
        <taxon>Thermoproteota</taxon>
        <taxon>Thermoprotei</taxon>
        <taxon>Sulfolobales</taxon>
        <taxon>Sulfolobaceae</taxon>
        <taxon>Sulfurisphaera</taxon>
    </lineage>
</organism>
<evidence type="ECO:0000255" key="1">
    <source>
        <dbReference type="HAMAP-Rule" id="MF_00349"/>
    </source>
</evidence>
<evidence type="ECO:0000305" key="2"/>
<protein>
    <recommendedName>
        <fullName evidence="1">Large ribosomal subunit protein eL34</fullName>
    </recommendedName>
    <alternativeName>
        <fullName evidence="2">50S ribosomal protein L34e</fullName>
    </alternativeName>
</protein>